<accession>Q7TT49</accession>
<accession>O54875</accession>
<feature type="chain" id="PRO_0000086396" description="Serine/threonine-protein kinase MRCK beta">
    <location>
        <begin position="1"/>
        <end position="1713"/>
    </location>
</feature>
<feature type="domain" description="Protein kinase" evidence="5 11">
    <location>
        <begin position="76"/>
        <end position="342"/>
    </location>
</feature>
<feature type="domain" description="AGC-kinase C-terminal" evidence="13">
    <location>
        <begin position="343"/>
        <end position="413"/>
    </location>
</feature>
<feature type="domain" description="PH" evidence="10">
    <location>
        <begin position="1096"/>
        <end position="1215"/>
    </location>
</feature>
<feature type="domain" description="CNH" evidence="14">
    <location>
        <begin position="1241"/>
        <end position="1515"/>
    </location>
</feature>
<feature type="domain" description="CRIB" evidence="9">
    <location>
        <begin position="1585"/>
        <end position="1598"/>
    </location>
</feature>
<feature type="zinc finger region" description="Phorbol-ester/DAG-type" evidence="12">
    <location>
        <begin position="1026"/>
        <end position="1076"/>
    </location>
</feature>
<feature type="region of interest" description="Disordered" evidence="16">
    <location>
        <begin position="461"/>
        <end position="485"/>
    </location>
</feature>
<feature type="region of interest" description="Disordered" evidence="16">
    <location>
        <begin position="971"/>
        <end position="1014"/>
    </location>
</feature>
<feature type="region of interest" description="Disordered" evidence="16">
    <location>
        <begin position="1615"/>
        <end position="1713"/>
    </location>
</feature>
<feature type="coiled-coil region" evidence="8">
    <location>
        <begin position="434"/>
        <end position="649"/>
    </location>
</feature>
<feature type="coiled-coil region" evidence="8">
    <location>
        <begin position="681"/>
        <end position="815"/>
    </location>
</feature>
<feature type="coiled-coil region" evidence="8">
    <location>
        <begin position="882"/>
        <end position="939"/>
    </location>
</feature>
<feature type="compositionally biased region" description="Polar residues" evidence="16">
    <location>
        <begin position="463"/>
        <end position="481"/>
    </location>
</feature>
<feature type="compositionally biased region" description="Polar residues" evidence="16">
    <location>
        <begin position="971"/>
        <end position="994"/>
    </location>
</feature>
<feature type="compositionally biased region" description="Polar residues" evidence="16">
    <location>
        <begin position="1001"/>
        <end position="1014"/>
    </location>
</feature>
<feature type="compositionally biased region" description="Basic and acidic residues" evidence="16">
    <location>
        <begin position="1666"/>
        <end position="1677"/>
    </location>
</feature>
<feature type="active site" description="Proton acceptor" evidence="3 11 15">
    <location>
        <position position="200"/>
    </location>
</feature>
<feature type="binding site" evidence="3 11">
    <location>
        <begin position="82"/>
        <end position="90"/>
    </location>
    <ligand>
        <name>ATP</name>
        <dbReference type="ChEBI" id="CHEBI:30616"/>
    </ligand>
</feature>
<feature type="binding site" evidence="5 11">
    <location>
        <position position="105"/>
    </location>
    <ligand>
        <name>ATP</name>
        <dbReference type="ChEBI" id="CHEBI:30616"/>
    </ligand>
</feature>
<feature type="modified residue" description="Phosphoserine; by autocatalysis" evidence="1">
    <location>
        <position position="221"/>
    </location>
</feature>
<feature type="modified residue" description="Phosphoserine; by autocatalysis" evidence="1">
    <location>
        <position position="233"/>
    </location>
</feature>
<feature type="modified residue" description="Phosphothreonine; by autocatalysis" evidence="1">
    <location>
        <position position="239"/>
    </location>
</feature>
<feature type="modified residue" description="Phosphothreonine" evidence="7">
    <location>
        <position position="423"/>
    </location>
</feature>
<feature type="modified residue" description="Omega-N-methylarginine" evidence="7">
    <location>
        <position position="671"/>
    </location>
</feature>
<feature type="modified residue" description="Phosphoserine" evidence="6">
    <location>
        <position position="927"/>
    </location>
</feature>
<feature type="modified residue" description="Phosphotyrosine" evidence="6">
    <location>
        <position position="954"/>
    </location>
</feature>
<feature type="modified residue" description="Phosphoserine" evidence="7">
    <location>
        <position position="1682"/>
    </location>
</feature>
<feature type="modified residue" description="Phosphoserine" evidence="7">
    <location>
        <position position="1684"/>
    </location>
</feature>
<feature type="modified residue" description="Phosphoserine" evidence="25">
    <location>
        <position position="1688"/>
    </location>
</feature>
<feature type="modified residue" description="Phosphoserine" evidence="25">
    <location>
        <position position="1692"/>
    </location>
</feature>
<feature type="modified residue" description="Phosphoserine" evidence="25">
    <location>
        <position position="1695"/>
    </location>
</feature>
<feature type="mutagenesis site" description="Abolishes interaction with TJP1; when associated with Q-954." evidence="18">
    <original>F</original>
    <variation>Q</variation>
    <location>
        <position position="952"/>
    </location>
</feature>
<feature type="mutagenesis site" description="Abolishes interaction with TJP1; when associated with Q-952." evidence="18">
    <original>Y</original>
    <variation>Q</variation>
    <location>
        <position position="954"/>
    </location>
</feature>
<feature type="mutagenesis site" description="Abolishes interaction with TJP1; when associated with Q-966." evidence="18">
    <original>L</original>
    <variation>Q</variation>
    <location>
        <position position="964"/>
    </location>
</feature>
<feature type="mutagenesis site" description="Abolishes interaction with TJP1; when associated with Q-964." evidence="18">
    <original>F</original>
    <variation>Q</variation>
    <location>
        <position position="966"/>
    </location>
</feature>
<feature type="sequence conflict" description="In Ref. 1; AAC02942." evidence="22" ref="1">
    <original>A</original>
    <variation>R</variation>
    <location>
        <position position="706"/>
    </location>
</feature>
<feature type="sequence conflict" description="In Ref. 1; AAC02942." evidence="22" ref="1">
    <original>R</original>
    <variation>C</variation>
    <location>
        <position position="1523"/>
    </location>
</feature>
<proteinExistence type="evidence at protein level"/>
<keyword id="KW-0067">ATP-binding</keyword>
<keyword id="KW-0965">Cell junction</keyword>
<keyword id="KW-1003">Cell membrane</keyword>
<keyword id="KW-0966">Cell projection</keyword>
<keyword id="KW-0175">Coiled coil</keyword>
<keyword id="KW-0963">Cytoplasm</keyword>
<keyword id="KW-0418">Kinase</keyword>
<keyword id="KW-0460">Magnesium</keyword>
<keyword id="KW-0472">Membrane</keyword>
<keyword id="KW-0479">Metal-binding</keyword>
<keyword id="KW-0488">Methylation</keyword>
<keyword id="KW-0547">Nucleotide-binding</keyword>
<keyword id="KW-0597">Phosphoprotein</keyword>
<keyword id="KW-1185">Reference proteome</keyword>
<keyword id="KW-0723">Serine/threonine-protein kinase</keyword>
<keyword id="KW-0808">Transferase</keyword>
<keyword id="KW-0862">Zinc</keyword>
<keyword id="KW-0863">Zinc-finger</keyword>
<dbReference type="EC" id="2.7.11.1"/>
<dbReference type="EMBL" id="AF021936">
    <property type="protein sequence ID" value="AAC02942.1"/>
    <property type="status" value="ALT_FRAME"/>
    <property type="molecule type" value="mRNA"/>
</dbReference>
<dbReference type="EMBL" id="AY277590">
    <property type="protein sequence ID" value="AAP34403.1"/>
    <property type="molecule type" value="mRNA"/>
</dbReference>
<dbReference type="PIR" id="T14050">
    <property type="entry name" value="T14050"/>
</dbReference>
<dbReference type="RefSeq" id="NP_446072.2">
    <property type="nucleotide sequence ID" value="NM_053620.3"/>
</dbReference>
<dbReference type="SMR" id="Q7TT49"/>
<dbReference type="FunCoup" id="Q7TT49">
    <property type="interactions" value="2937"/>
</dbReference>
<dbReference type="IntAct" id="Q7TT49">
    <property type="interactions" value="16"/>
</dbReference>
<dbReference type="MINT" id="Q7TT49"/>
<dbReference type="STRING" id="10116.ENSRNOP00000036487"/>
<dbReference type="iPTMnet" id="Q7TT49"/>
<dbReference type="PhosphoSitePlus" id="Q7TT49"/>
<dbReference type="jPOST" id="Q7TT49"/>
<dbReference type="PaxDb" id="10116-ENSRNOP00000036487"/>
<dbReference type="Ensembl" id="ENSRNOT00000039059.4">
    <property type="protein sequence ID" value="ENSRNOP00000036487.2"/>
    <property type="gene ID" value="ENSRNOG00000009675.6"/>
</dbReference>
<dbReference type="GeneID" id="113960"/>
<dbReference type="KEGG" id="rno:113960"/>
<dbReference type="UCSC" id="RGD:621753">
    <property type="organism name" value="rat"/>
</dbReference>
<dbReference type="AGR" id="RGD:621753"/>
<dbReference type="CTD" id="9578"/>
<dbReference type="RGD" id="621753">
    <property type="gene designation" value="Cdc42bpb"/>
</dbReference>
<dbReference type="eggNOG" id="KOG0612">
    <property type="taxonomic scope" value="Eukaryota"/>
</dbReference>
<dbReference type="GeneTree" id="ENSGT01030000234517"/>
<dbReference type="HOGENOM" id="CLU_000288_140_3_1"/>
<dbReference type="InParanoid" id="Q7TT49"/>
<dbReference type="OMA" id="ELEALKX"/>
<dbReference type="PhylomeDB" id="Q7TT49"/>
<dbReference type="TreeFam" id="TF313551"/>
<dbReference type="Reactome" id="R-RNO-9013406">
    <property type="pathway name" value="RHOQ GTPase cycle"/>
</dbReference>
<dbReference type="PRO" id="PR:Q7TT49"/>
<dbReference type="Proteomes" id="UP000002494">
    <property type="component" value="Chromosome 6"/>
</dbReference>
<dbReference type="Bgee" id="ENSRNOG00000009675">
    <property type="expression patterns" value="Expressed in frontal cortex and 19 other cell types or tissues"/>
</dbReference>
<dbReference type="ExpressionAtlas" id="Q7TT49">
    <property type="expression patterns" value="baseline and differential"/>
</dbReference>
<dbReference type="GO" id="GO:0042641">
    <property type="term" value="C:actomyosin"/>
    <property type="evidence" value="ECO:0000314"/>
    <property type="project" value="UniProtKB"/>
</dbReference>
<dbReference type="GO" id="GO:0031252">
    <property type="term" value="C:cell leading edge"/>
    <property type="evidence" value="ECO:0000250"/>
    <property type="project" value="UniProtKB"/>
</dbReference>
<dbReference type="GO" id="GO:0005911">
    <property type="term" value="C:cell-cell junction"/>
    <property type="evidence" value="ECO:0000250"/>
    <property type="project" value="UniProtKB"/>
</dbReference>
<dbReference type="GO" id="GO:0005737">
    <property type="term" value="C:cytoplasm"/>
    <property type="evidence" value="ECO:0000318"/>
    <property type="project" value="GO_Central"/>
</dbReference>
<dbReference type="GO" id="GO:0005856">
    <property type="term" value="C:cytoskeleton"/>
    <property type="evidence" value="ECO:0000318"/>
    <property type="project" value="GO_Central"/>
</dbReference>
<dbReference type="GO" id="GO:0030027">
    <property type="term" value="C:lamellipodium"/>
    <property type="evidence" value="ECO:0000250"/>
    <property type="project" value="UniProtKB"/>
</dbReference>
<dbReference type="GO" id="GO:0005886">
    <property type="term" value="C:plasma membrane"/>
    <property type="evidence" value="ECO:0007669"/>
    <property type="project" value="UniProtKB-SubCell"/>
</dbReference>
<dbReference type="GO" id="GO:0005524">
    <property type="term" value="F:ATP binding"/>
    <property type="evidence" value="ECO:0000250"/>
    <property type="project" value="UniProtKB"/>
</dbReference>
<dbReference type="GO" id="GO:0000287">
    <property type="term" value="F:magnesium ion binding"/>
    <property type="evidence" value="ECO:0000250"/>
    <property type="project" value="UniProtKB"/>
</dbReference>
<dbReference type="GO" id="GO:0004672">
    <property type="term" value="F:protein kinase activity"/>
    <property type="evidence" value="ECO:0000266"/>
    <property type="project" value="RGD"/>
</dbReference>
<dbReference type="GO" id="GO:0106310">
    <property type="term" value="F:protein serine kinase activity"/>
    <property type="evidence" value="ECO:0007669"/>
    <property type="project" value="RHEA"/>
</dbReference>
<dbReference type="GO" id="GO:0004674">
    <property type="term" value="F:protein serine/threonine kinase activity"/>
    <property type="evidence" value="ECO:0000314"/>
    <property type="project" value="RGD"/>
</dbReference>
<dbReference type="GO" id="GO:0044877">
    <property type="term" value="F:protein-containing complex binding"/>
    <property type="evidence" value="ECO:0000266"/>
    <property type="project" value="RGD"/>
</dbReference>
<dbReference type="GO" id="GO:0031267">
    <property type="term" value="F:small GTPase binding"/>
    <property type="evidence" value="ECO:0000314"/>
    <property type="project" value="RGD"/>
</dbReference>
<dbReference type="GO" id="GO:0008270">
    <property type="term" value="F:zinc ion binding"/>
    <property type="evidence" value="ECO:0007669"/>
    <property type="project" value="UniProtKB-KW"/>
</dbReference>
<dbReference type="GO" id="GO:0030036">
    <property type="term" value="P:actin cytoskeleton organization"/>
    <property type="evidence" value="ECO:0000315"/>
    <property type="project" value="RGD"/>
</dbReference>
<dbReference type="GO" id="GO:0031032">
    <property type="term" value="P:actomyosin structure organization"/>
    <property type="evidence" value="ECO:0000315"/>
    <property type="project" value="UniProtKB"/>
</dbReference>
<dbReference type="GO" id="GO:0016477">
    <property type="term" value="P:cell migration"/>
    <property type="evidence" value="ECO:0000315"/>
    <property type="project" value="UniProtKB"/>
</dbReference>
<dbReference type="GO" id="GO:0006468">
    <property type="term" value="P:protein phosphorylation"/>
    <property type="evidence" value="ECO:0000250"/>
    <property type="project" value="UniProtKB"/>
</dbReference>
<dbReference type="CDD" id="cd20865">
    <property type="entry name" value="C1_MRCKbeta"/>
    <property type="match status" value="1"/>
</dbReference>
<dbReference type="CDD" id="cd00132">
    <property type="entry name" value="CRIB"/>
    <property type="match status" value="1"/>
</dbReference>
<dbReference type="CDD" id="cd01243">
    <property type="entry name" value="PH_MRCK"/>
    <property type="match status" value="1"/>
</dbReference>
<dbReference type="CDD" id="cd05624">
    <property type="entry name" value="STKc_MRCK_beta"/>
    <property type="match status" value="1"/>
</dbReference>
<dbReference type="FunFam" id="2.30.29.30:FF:000140">
    <property type="entry name" value="CDC42 binding protein kinase beta"/>
    <property type="match status" value="1"/>
</dbReference>
<dbReference type="FunFam" id="1.10.510.10:FF:000014">
    <property type="entry name" value="Non-specific serine/threonine protein kinase"/>
    <property type="match status" value="1"/>
</dbReference>
<dbReference type="FunFam" id="1.20.5.340:FF:000010">
    <property type="entry name" value="Non-specific serine/threonine protein kinase"/>
    <property type="match status" value="1"/>
</dbReference>
<dbReference type="FunFam" id="3.30.60.20:FF:000005">
    <property type="entry name" value="Non-specific serine/threonine protein kinase"/>
    <property type="match status" value="1"/>
</dbReference>
<dbReference type="FunFam" id="3.30.200.20:FF:001044">
    <property type="entry name" value="Serine/threonine-protein kinase MRCK beta"/>
    <property type="match status" value="1"/>
</dbReference>
<dbReference type="FunFam" id="3.30.200.20:FF:001209">
    <property type="entry name" value="Serine/threonine-protein kinase MRCK beta"/>
    <property type="match status" value="1"/>
</dbReference>
<dbReference type="Gene3D" id="1.20.5.340">
    <property type="match status" value="1"/>
</dbReference>
<dbReference type="Gene3D" id="3.30.60.20">
    <property type="match status" value="1"/>
</dbReference>
<dbReference type="Gene3D" id="3.30.200.20">
    <property type="entry name" value="Phosphorylase Kinase, domain 1"/>
    <property type="match status" value="1"/>
</dbReference>
<dbReference type="Gene3D" id="2.30.29.30">
    <property type="entry name" value="Pleckstrin-homology domain (PH domain)/Phosphotyrosine-binding domain (PTB)"/>
    <property type="match status" value="1"/>
</dbReference>
<dbReference type="Gene3D" id="1.10.510.10">
    <property type="entry name" value="Transferase(Phosphotransferase) domain 1"/>
    <property type="match status" value="1"/>
</dbReference>
<dbReference type="InterPro" id="IPR000961">
    <property type="entry name" value="AGC-kinase_C"/>
</dbReference>
<dbReference type="InterPro" id="IPR046349">
    <property type="entry name" value="C1-like_sf"/>
</dbReference>
<dbReference type="InterPro" id="IPR001180">
    <property type="entry name" value="CNH_dom"/>
</dbReference>
<dbReference type="InterPro" id="IPR000095">
    <property type="entry name" value="CRIB_dom"/>
</dbReference>
<dbReference type="InterPro" id="IPR020454">
    <property type="entry name" value="DAG/PE-bd"/>
</dbReference>
<dbReference type="InterPro" id="IPR031597">
    <property type="entry name" value="KELK"/>
</dbReference>
<dbReference type="InterPro" id="IPR011009">
    <property type="entry name" value="Kinase-like_dom_sf"/>
</dbReference>
<dbReference type="InterPro" id="IPR042718">
    <property type="entry name" value="MRCKB_STKc"/>
</dbReference>
<dbReference type="InterPro" id="IPR014930">
    <property type="entry name" value="Myotonic_dystrophy_kinase_coil"/>
</dbReference>
<dbReference type="InterPro" id="IPR002219">
    <property type="entry name" value="PE/DAG-bd"/>
</dbReference>
<dbReference type="InterPro" id="IPR011993">
    <property type="entry name" value="PH-like_dom_sf"/>
</dbReference>
<dbReference type="InterPro" id="IPR001849">
    <property type="entry name" value="PH_domain"/>
</dbReference>
<dbReference type="InterPro" id="IPR000719">
    <property type="entry name" value="Prot_kinase_dom"/>
</dbReference>
<dbReference type="InterPro" id="IPR017441">
    <property type="entry name" value="Protein_kinase_ATP_BS"/>
</dbReference>
<dbReference type="InterPro" id="IPR050839">
    <property type="entry name" value="Rho-assoc_Ser/Thr_Kinase"/>
</dbReference>
<dbReference type="InterPro" id="IPR008271">
    <property type="entry name" value="Ser/Thr_kinase_AS"/>
</dbReference>
<dbReference type="PANTHER" id="PTHR22988">
    <property type="entry name" value="MYOTONIC DYSTROPHY S/T KINASE-RELATED"/>
    <property type="match status" value="1"/>
</dbReference>
<dbReference type="PANTHER" id="PTHR22988:SF34">
    <property type="entry name" value="SERINE_THREONINE-PROTEIN KINASE MRCK BETA"/>
    <property type="match status" value="1"/>
</dbReference>
<dbReference type="Pfam" id="PF00130">
    <property type="entry name" value="C1_1"/>
    <property type="match status" value="1"/>
</dbReference>
<dbReference type="Pfam" id="PF00780">
    <property type="entry name" value="CNH"/>
    <property type="match status" value="1"/>
</dbReference>
<dbReference type="Pfam" id="PF08826">
    <property type="entry name" value="DMPK_coil"/>
    <property type="match status" value="1"/>
</dbReference>
<dbReference type="Pfam" id="PF15796">
    <property type="entry name" value="KELK"/>
    <property type="match status" value="1"/>
</dbReference>
<dbReference type="Pfam" id="PF25346">
    <property type="entry name" value="PH_MRCK"/>
    <property type="match status" value="1"/>
</dbReference>
<dbReference type="Pfam" id="PF00069">
    <property type="entry name" value="Pkinase"/>
    <property type="match status" value="1"/>
</dbReference>
<dbReference type="PRINTS" id="PR00008">
    <property type="entry name" value="DAGPEDOMAIN"/>
</dbReference>
<dbReference type="SMART" id="SM00109">
    <property type="entry name" value="C1"/>
    <property type="match status" value="1"/>
</dbReference>
<dbReference type="SMART" id="SM00036">
    <property type="entry name" value="CNH"/>
    <property type="match status" value="1"/>
</dbReference>
<dbReference type="SMART" id="SM00285">
    <property type="entry name" value="PBD"/>
    <property type="match status" value="1"/>
</dbReference>
<dbReference type="SMART" id="SM00233">
    <property type="entry name" value="PH"/>
    <property type="match status" value="1"/>
</dbReference>
<dbReference type="SMART" id="SM00133">
    <property type="entry name" value="S_TK_X"/>
    <property type="match status" value="1"/>
</dbReference>
<dbReference type="SMART" id="SM00220">
    <property type="entry name" value="S_TKc"/>
    <property type="match status" value="1"/>
</dbReference>
<dbReference type="SUPFAM" id="SSF57889">
    <property type="entry name" value="Cysteine-rich domain"/>
    <property type="match status" value="1"/>
</dbReference>
<dbReference type="SUPFAM" id="SSF50729">
    <property type="entry name" value="PH domain-like"/>
    <property type="match status" value="1"/>
</dbReference>
<dbReference type="SUPFAM" id="SSF56112">
    <property type="entry name" value="Protein kinase-like (PK-like)"/>
    <property type="match status" value="1"/>
</dbReference>
<dbReference type="SUPFAM" id="SSF69322">
    <property type="entry name" value="Tricorn protease domain 2"/>
    <property type="match status" value="1"/>
</dbReference>
<dbReference type="PROSITE" id="PS51285">
    <property type="entry name" value="AGC_KINASE_CTER"/>
    <property type="match status" value="1"/>
</dbReference>
<dbReference type="PROSITE" id="PS50219">
    <property type="entry name" value="CNH"/>
    <property type="match status" value="1"/>
</dbReference>
<dbReference type="PROSITE" id="PS50108">
    <property type="entry name" value="CRIB"/>
    <property type="match status" value="1"/>
</dbReference>
<dbReference type="PROSITE" id="PS50003">
    <property type="entry name" value="PH_DOMAIN"/>
    <property type="match status" value="1"/>
</dbReference>
<dbReference type="PROSITE" id="PS00107">
    <property type="entry name" value="PROTEIN_KINASE_ATP"/>
    <property type="match status" value="1"/>
</dbReference>
<dbReference type="PROSITE" id="PS50011">
    <property type="entry name" value="PROTEIN_KINASE_DOM"/>
    <property type="match status" value="1"/>
</dbReference>
<dbReference type="PROSITE" id="PS00108">
    <property type="entry name" value="PROTEIN_KINASE_ST"/>
    <property type="match status" value="1"/>
</dbReference>
<dbReference type="PROSITE" id="PS00479">
    <property type="entry name" value="ZF_DAG_PE_1"/>
    <property type="match status" value="1"/>
</dbReference>
<dbReference type="PROSITE" id="PS50081">
    <property type="entry name" value="ZF_DAG_PE_2"/>
    <property type="match status" value="1"/>
</dbReference>
<reference evidence="22 23" key="1">
    <citation type="journal article" date="1998" name="Mol. Cell. Biol.">
        <title>Myotonic dystrophy kinase-related Cdc42-binding kinase acts as a Cdc42 effector in promoting cytoskeletal reorganization.</title>
        <authorList>
            <person name="Leung T."/>
            <person name="Chen X.-Q."/>
            <person name="Tan I."/>
            <person name="Manser E."/>
            <person name="Lim L."/>
        </authorList>
    </citation>
    <scope>NUCLEOTIDE SEQUENCE [MRNA]</scope>
    <scope>TISSUE SPECIFICITY</scope>
    <source>
        <tissue evidence="23">Brain</tissue>
    </source>
</reference>
<reference evidence="24" key="2">
    <citation type="submission" date="2003-04" db="EMBL/GenBank/DDBJ databases">
        <authorList>
            <person name="Huang C.Q."/>
            <person name="Wu S.L."/>
            <person name="Cheng Z."/>
        </authorList>
    </citation>
    <scope>NUCLEOTIDE SEQUENCE [MRNA]</scope>
</reference>
<reference key="3">
    <citation type="journal article" date="2008" name="Cell">
        <title>A tripartite complex containing MRCK modulates lamellar actomyosin retrograde flow.</title>
        <authorList>
            <person name="Tan I."/>
            <person name="Yong J."/>
            <person name="Dong J.M."/>
            <person name="Lim L."/>
            <person name="Leung T."/>
        </authorList>
    </citation>
    <scope>FUNCTION</scope>
    <scope>INTERACTION WITH LURAP1 AND MYO18A</scope>
</reference>
<reference key="4">
    <citation type="journal article" date="2011" name="EMBO J.">
        <title>Cdc42-dependent formation of the ZO-1/MRCKbeta complex at the leading edge controls cell migration.</title>
        <authorList>
            <person name="Huo L."/>
            <person name="Wen W."/>
            <person name="Wang R."/>
            <person name="Kam C."/>
            <person name="Xia J."/>
            <person name="Feng W."/>
            <person name="Zhang M."/>
        </authorList>
    </citation>
    <scope>FUNCTION</scope>
    <scope>INTERACTION WITH TJP1</scope>
    <scope>MUTAGENESIS OF PHE-952; TYR-954; LEU-964 AND PHE-966</scope>
    <scope>SUBCELLULAR LOCATION</scope>
</reference>
<reference key="5">
    <citation type="journal article" date="2011" name="FEBS Lett.">
        <title>Chelerythrine perturbs lamellar actomyosin filaments by selective inhibition of myotonic dystrophy kinase-related Cdc42-binding kinase.</title>
        <authorList>
            <person name="Tan I."/>
            <person name="Lai J."/>
            <person name="Yong J."/>
            <person name="Li S.F."/>
            <person name="Leung T."/>
        </authorList>
    </citation>
    <scope>FUNCTION IN PHOSPHORYLATION OF PPP1R12A AND MYL9/MLC2</scope>
    <scope>ACTIVITY REGULATION</scope>
</reference>
<reference key="6">
    <citation type="journal article" date="2012" name="Nat. Commun.">
        <title>Quantitative maps of protein phosphorylation sites across 14 different rat organs and tissues.</title>
        <authorList>
            <person name="Lundby A."/>
            <person name="Secher A."/>
            <person name="Lage K."/>
            <person name="Nordsborg N.B."/>
            <person name="Dmytriyev A."/>
            <person name="Lundby C."/>
            <person name="Olsen J.V."/>
        </authorList>
    </citation>
    <scope>PHOSPHORYLATION [LARGE SCALE ANALYSIS] AT SER-1688; SER-1692 AND SER-1695</scope>
    <scope>IDENTIFICATION BY MASS SPECTROMETRY [LARGE SCALE ANALYSIS]</scope>
</reference>
<reference key="7">
    <citation type="journal article" date="2014" name="J. Biol. Chem.">
        <title>Adaptor protein LRAP25 mediates myotonic dystrophy kinase-related Cdc42-binding kinase (MRCK) regulation of LIMK1 protein in lamellipodial F-actin dynamics.</title>
        <authorList>
            <person name="Lee I.C."/>
            <person name="Leung T."/>
            <person name="Tan I."/>
        </authorList>
    </citation>
    <scope>INTERACTION WITH FAM89B AND LURAP1</scope>
    <source>
        <tissue>Brain</tissue>
    </source>
</reference>
<protein>
    <recommendedName>
        <fullName>Serine/threonine-protein kinase MRCK beta</fullName>
        <ecNumber>2.7.11.1</ecNumber>
    </recommendedName>
    <alternativeName>
        <fullName>CDC42-binding protein kinase beta</fullName>
    </alternativeName>
    <alternativeName>
        <fullName>DMPK-like beta</fullName>
    </alternativeName>
    <alternativeName>
        <fullName>Myotonic dystrophy kinase-related CDC42-binding kinase beta</fullName>
        <shortName>MRCK beta</shortName>
        <shortName>Myotonic dystrophy protein kinase-like beta</shortName>
    </alternativeName>
</protein>
<organism>
    <name type="scientific">Rattus norvegicus</name>
    <name type="common">Rat</name>
    <dbReference type="NCBI Taxonomy" id="10116"/>
    <lineage>
        <taxon>Eukaryota</taxon>
        <taxon>Metazoa</taxon>
        <taxon>Chordata</taxon>
        <taxon>Craniata</taxon>
        <taxon>Vertebrata</taxon>
        <taxon>Euteleostomi</taxon>
        <taxon>Mammalia</taxon>
        <taxon>Eutheria</taxon>
        <taxon>Euarchontoglires</taxon>
        <taxon>Glires</taxon>
        <taxon>Rodentia</taxon>
        <taxon>Myomorpha</taxon>
        <taxon>Muroidea</taxon>
        <taxon>Muridae</taxon>
        <taxon>Murinae</taxon>
        <taxon>Rattus</taxon>
    </lineage>
</organism>
<gene>
    <name evidence="24" type="primary">Cdc42bpb</name>
</gene>
<comment type="function">
    <text evidence="6 17 18 19">Serine/threonine-protein kinase which is an important downstream effector of CDC42 and plays a role in the regulation of cytoskeleton reorganization and cell migration. Regulates actin cytoskeletal reorganization via phosphorylation of PPP1R12C and MYL9/MLC2 (PubMed:21240187, PubMed:21457715). In concert with MYO18A and LURAP1, is involved in modulating lamellar actomyosin retrograde flow that is crucial to cell protrusion and migration. Phosphorylates PPP1R12A (PubMed:18854160). In concert with FAM89B/LRAP25 mediates the targeting of LIMK1 to the lamellipodium resulting in its activation and subsequent phosphorylation of CFL1 which is important for lamellipodial F-actin regulation (By similarity).</text>
</comment>
<comment type="catalytic activity">
    <reaction evidence="5">
        <text>L-seryl-[protein] + ATP = O-phospho-L-seryl-[protein] + ADP + H(+)</text>
        <dbReference type="Rhea" id="RHEA:17989"/>
        <dbReference type="Rhea" id="RHEA-COMP:9863"/>
        <dbReference type="Rhea" id="RHEA-COMP:11604"/>
        <dbReference type="ChEBI" id="CHEBI:15378"/>
        <dbReference type="ChEBI" id="CHEBI:29999"/>
        <dbReference type="ChEBI" id="CHEBI:30616"/>
        <dbReference type="ChEBI" id="CHEBI:83421"/>
        <dbReference type="ChEBI" id="CHEBI:456216"/>
        <dbReference type="EC" id="2.7.11.1"/>
    </reaction>
</comment>
<comment type="catalytic activity">
    <reaction evidence="5">
        <text>L-threonyl-[protein] + ATP = O-phospho-L-threonyl-[protein] + ADP + H(+)</text>
        <dbReference type="Rhea" id="RHEA:46608"/>
        <dbReference type="Rhea" id="RHEA-COMP:11060"/>
        <dbReference type="Rhea" id="RHEA-COMP:11605"/>
        <dbReference type="ChEBI" id="CHEBI:15378"/>
        <dbReference type="ChEBI" id="CHEBI:30013"/>
        <dbReference type="ChEBI" id="CHEBI:30616"/>
        <dbReference type="ChEBI" id="CHEBI:61977"/>
        <dbReference type="ChEBI" id="CHEBI:456216"/>
        <dbReference type="EC" id="2.7.11.1"/>
    </reaction>
</comment>
<comment type="cofactor">
    <cofactor evidence="5">
        <name>Mg(2+)</name>
        <dbReference type="ChEBI" id="CHEBI:18420"/>
    </cofactor>
</comment>
<comment type="activity regulation">
    <text evidence="1 19">Maintained in an inactive, closed conformation by an interaction between the kinase domain and the negative autoregulatory C-terminal coiled-coil region. Agonist binding to the phorbol ester binding site disrupts this, releasing the kinase domain to allow N-terminus-mediated dimerization and kinase activation by transautophosphorylation (By similarity). Inhibited by chelerythrine chloride.</text>
</comment>
<comment type="subunit">
    <text evidence="6 7 17 18 20">Homodimer and homotetramer via the coiled coil regions. Interacts tightly with GTP-bound but not GDP-bound CDC42 (By similarity). Interacts with TJP1; this interaction requires the presence of catalytically active CDC42 (PubMed:21240187). Forms a tripartite complex with MYO18A and LURAP1 with the latter acting as an adapter connecting CDC42BPB and MYO18A. LURAP1 binding results in activation of CDC42BPB by abolition of its negative autoregulation (PubMed:18854160). Interacts with STRIP1, STRN3 and SIKE1 (By similarity). Interacts with CPNE4 (via VWFA domain) (By similarity). Interacts with LURAP1 (PubMed:25107909). Interacts (via AGC-kinase C-terminal domain) with FAM89B/LRAP25 (via LRR repeat) (PubMed:25107909). Forms a tripartite complex with FAM89B/LRAP25 and LIMK1 (By similarity).</text>
</comment>
<comment type="interaction">
    <interactant intactId="EBI-692673">
        <id>Q7TT49</id>
    </interactant>
    <interactant intactId="EBI-2015467">
        <id>D4A8G3</id>
        <label>Lurap1</label>
    </interactant>
    <organismsDiffer>false</organismsDiffer>
    <experiments>4</experiments>
</comment>
<comment type="subcellular location">
    <subcellularLocation>
        <location evidence="1">Cytoplasm</location>
    </subcellularLocation>
    <subcellularLocation>
        <location evidence="18">Cell membrane</location>
        <topology evidence="18">Peripheral membrane protein</topology>
        <orientation evidence="18">Cytoplasmic side</orientation>
    </subcellularLocation>
    <subcellularLocation>
        <location evidence="18">Cell junction</location>
    </subcellularLocation>
    <subcellularLocation>
        <location evidence="4">Cell projection</location>
        <location evidence="4">Lamellipodium</location>
    </subcellularLocation>
    <text evidence="2 4 18">Displays a dispersed punctate distribution and concentrates along the cell periphery, especially at the leading edge and cell-cell junction. This concentration is PH-domain dependent (By similarity). Detected at the leading edge of migrating and wounded cells; this localization requires the presence of catalytically active CDC42 (PubMed:21240187). Localizes in the lamellipodium in a FAM89B/LRAP25-dependent manner (By similarity).</text>
</comment>
<comment type="tissue specificity">
    <text evidence="21">Expressed in all tissues examined with highest levels in lung and kidney.</text>
</comment>
<comment type="PTM">
    <text evidence="7">Proteolytically cleaved by caspases upon apoptosis induction.</text>
</comment>
<comment type="similarity">
    <text evidence="22">Belongs to the protein kinase superfamily. AGC Ser/Thr protein kinase family. DMPK subfamily.</text>
</comment>
<comment type="sequence caution" evidence="22">
    <conflict type="frameshift">
        <sequence resource="EMBL-CDS" id="AAC02942"/>
    </conflict>
</comment>
<evidence type="ECO:0000250" key="1"/>
<evidence type="ECO:0000250" key="2">
    <source>
        <dbReference type="UniProtKB" id="O54874"/>
    </source>
</evidence>
<evidence type="ECO:0000250" key="3">
    <source>
        <dbReference type="UniProtKB" id="P54265"/>
    </source>
</evidence>
<evidence type="ECO:0000250" key="4">
    <source>
        <dbReference type="UniProtKB" id="Q3UU96"/>
    </source>
</evidence>
<evidence type="ECO:0000250" key="5">
    <source>
        <dbReference type="UniProtKB" id="Q5VT25"/>
    </source>
</evidence>
<evidence type="ECO:0000250" key="6">
    <source>
        <dbReference type="UniProtKB" id="Q7TT50"/>
    </source>
</evidence>
<evidence type="ECO:0000250" key="7">
    <source>
        <dbReference type="UniProtKB" id="Q9Y5S2"/>
    </source>
</evidence>
<evidence type="ECO:0000255" key="8"/>
<evidence type="ECO:0000255" key="9">
    <source>
        <dbReference type="PROSITE-ProRule" id="PRU00057"/>
    </source>
</evidence>
<evidence type="ECO:0000255" key="10">
    <source>
        <dbReference type="PROSITE-ProRule" id="PRU00145"/>
    </source>
</evidence>
<evidence type="ECO:0000255" key="11">
    <source>
        <dbReference type="PROSITE-ProRule" id="PRU00159"/>
    </source>
</evidence>
<evidence type="ECO:0000255" key="12">
    <source>
        <dbReference type="PROSITE-ProRule" id="PRU00226"/>
    </source>
</evidence>
<evidence type="ECO:0000255" key="13">
    <source>
        <dbReference type="PROSITE-ProRule" id="PRU00618"/>
    </source>
</evidence>
<evidence type="ECO:0000255" key="14">
    <source>
        <dbReference type="PROSITE-ProRule" id="PRU00795"/>
    </source>
</evidence>
<evidence type="ECO:0000255" key="15">
    <source>
        <dbReference type="PROSITE-ProRule" id="PRU10027"/>
    </source>
</evidence>
<evidence type="ECO:0000256" key="16">
    <source>
        <dbReference type="SAM" id="MobiDB-lite"/>
    </source>
</evidence>
<evidence type="ECO:0000269" key="17">
    <source>
    </source>
</evidence>
<evidence type="ECO:0000269" key="18">
    <source>
    </source>
</evidence>
<evidence type="ECO:0000269" key="19">
    <source>
    </source>
</evidence>
<evidence type="ECO:0000269" key="20">
    <source>
    </source>
</evidence>
<evidence type="ECO:0000269" key="21">
    <source>
    </source>
</evidence>
<evidence type="ECO:0000305" key="22"/>
<evidence type="ECO:0000312" key="23">
    <source>
        <dbReference type="EMBL" id="AAC02942.1"/>
    </source>
</evidence>
<evidence type="ECO:0000312" key="24">
    <source>
        <dbReference type="EMBL" id="AAP34403.1"/>
    </source>
</evidence>
<evidence type="ECO:0007744" key="25">
    <source>
    </source>
</evidence>
<sequence length="1713" mass="194888">MSAKVRLKKLEQLLLDGPWRNESSLSVETLLDVLVCLYTECSHSALRRDKYVAEFLEWAKPFTQLVKDMQLHREDFEIIKVIGRGAFGEVAVVKMKNTERIYAMKILNKWEMLKRAETACFREERDVLVNGDCQWITALHYAFQDENYLYLVMDYYVGGDLLTLLSKFEDKLPEDMARFYIGEMVLAIDSIHQLHYVHRDIKPDNVLLDVNGHIRLADFGSCLKMNDDGTVQSSVAVGTPDYISPEILQAMEDGMGKYGPECDWWSLGVCMYEMLYGETPFYAESLVETYGKIMNHEERFQFPSHVTDVSEEAKDLIQRLICSRERRLGQNGIEDFKKHAFFEGLNWENIRNLEAPYIPDVSSPSDTSNFDVDDDVLRNIEILPPGSHTGFSGLHLPFIGFTFTTESCFSDRGSLKSMIQSNTLTKDEDVQRDLENSLQIEAYERRIRRLEQEKLELSRKLQESTQTVQSLHGSTRALGNSNRDKEIKRLNEELERMKSKMADSNRLERQLEDTVTLRQEHEDSTQRLKGLEKQYRLARQEKEELHKQLVEASERLKSQTKELKDAHQQRKRALQEFSELNERMAELRSQKQKVSRQLRDKEEEMEVAMQKIDSMRQDIRKSEKSRKELEARLEDAVAEASKERKLREHSESFSKQMERELETLKVKQGGRGPGATLEHQQEISKIRSELEKKVLFYEEELVRREASHVLEVKNVKKEVHESESHQLALQKEVLMLKDKLEKSKRERHSEMEEAIGAMKDKYERERAMLFDENKKLTAENEKLCSFVDKLTAQNRQLEDELQDLASKKESVAHWEAQIAEIIQWVSDEKDARGYLQALASKMTEELETLRSSSLGSRTLDPLWKVRRSQKLDMSARLELQSALEAEIRAKQLVHEELRKVKDTSLAFESKLKESEAKNRELLEEMQSLKKRMEEKFRADTGLKLPDFQDPIFEYFNTAPLAHDLTFRTSSASDQETQASKLDLSPSVSVATSTEQQEDAARSQQRPSTVPLPNTQALAMAGPKPKAHQFSIKSFPSPTQCSHCTSLMVGLIRQGYACEVCAFSCHVSCKDSAPQVCPIPPEQSKRPLGVDVQRGIGTAYKGYVKVPKPTGVKKGWQRAYAVVCDCKLFLYDLPEGKSTQPGVIASQVLDLRDDEFAVSSVLASDVIHATRRDIPCIFRVTASLLGSPSKTSSLLILTENENEKRKWVGILEGLQAILHKNRLRSQVVHVAQEAYDSSLPLIKTVLAAAIVDGDRIAVGLEEGLYVIELTRDVIVRAADCKKVYQIELAPKEKLILLLCGRNHHVHLYPWTSFDGAEASNFDIKLPETKGCQLIATGTLRKSSSTCLFVAVKRLVLCYEIQRTKPFHRKFNEIVAPGHVQWMAMFKDRLCVGYPSGFSLLSIQGDGQPLDLVNPADPSLAFLSQQSFDALCAVELKSEEYLLCFSHMGLYVDPQGRRSRTQELMWPAAPVACSCSSSHVTVYSEYGVDVFDVRTMEWVQTIGLRRIRPLNSDGSLNLLGCEPPRLIYFKNKFSGTVLNVPDTSDNSKKQMLRTRSKRRFVFKVPEEERLQQRREMLRDPELRSKMISNPTNFNHVAHMGPGDGMQVLMDLPLSAAPTAQEEKQGPAPTGLPRQLPSRNKPYVSWPSSGGSEPGVPVPLRSMSDPDQDFDKEPDSDSTKHSTPSNSSNPSGPPSPNSPHRSQLPLEGLDQPACDA</sequence>
<name>MRCKB_RAT</name>